<protein>
    <recommendedName>
        <fullName evidence="1">Cytoplasmic tRNA 2-thiolation protein 2</fullName>
    </recommendedName>
</protein>
<proteinExistence type="inferred from homology"/>
<feature type="chain" id="PRO_0000369273" description="Cytoplasmic tRNA 2-thiolation protein 2">
    <location>
        <begin position="1"/>
        <end position="404"/>
    </location>
</feature>
<reference key="1">
    <citation type="journal article" date="2007" name="Nature">
        <title>Evolution of genes and genomes on the Drosophila phylogeny.</title>
        <authorList>
            <consortium name="Drosophila 12 genomes consortium"/>
        </authorList>
    </citation>
    <scope>NUCLEOTIDE SEQUENCE [LARGE SCALE GENOMIC DNA]</scope>
    <source>
        <strain>Tucson 15081-1352.22</strain>
    </source>
</reference>
<sequence length="404" mass="45052">MCSIGEDDFGDEGGTHAMLPSCSETGIVLRAGDCSKCGQSSQQLYKLNFRSAECSECFLKYVRHKFRAALGAAKVLPRNAEILLVIDGSSESLVLLDMVHFAQTQNTFKRLHCNARVLYVDAHCSPIKEEESPLLALNELQRRYEPFEFYVIQLNGDPQSLQLLKDYTVRQLDSILDQFNSSTSRQDYMQQKRKFLVGGVAMKLKCSHVFEPSISPSLATQLLTSVALGRGASVALDVALLDDRLMGDVKLLRPLKDLNDQEVQFYVHAKELKAFRVDDPSHYPLSGGSLQSLTRDFVANLQLNYASTVSTVFRTGDKIAPKRNSKEIMASYCALCQSLLDNNISDTLLAIEYSRAVSEVGVELKMKSSCDVLEQRVLERLNEKEELCHACRNIQAELSSGTLI</sequence>
<organism>
    <name type="scientific">Drosophila mojavensis</name>
    <name type="common">Fruit fly</name>
    <dbReference type="NCBI Taxonomy" id="7230"/>
    <lineage>
        <taxon>Eukaryota</taxon>
        <taxon>Metazoa</taxon>
        <taxon>Ecdysozoa</taxon>
        <taxon>Arthropoda</taxon>
        <taxon>Hexapoda</taxon>
        <taxon>Insecta</taxon>
        <taxon>Pterygota</taxon>
        <taxon>Neoptera</taxon>
        <taxon>Endopterygota</taxon>
        <taxon>Diptera</taxon>
        <taxon>Brachycera</taxon>
        <taxon>Muscomorpha</taxon>
        <taxon>Ephydroidea</taxon>
        <taxon>Drosophilidae</taxon>
        <taxon>Drosophila</taxon>
    </lineage>
</organism>
<gene>
    <name type="ORF">GI19780</name>
</gene>
<evidence type="ECO:0000255" key="1">
    <source>
        <dbReference type="HAMAP-Rule" id="MF_03054"/>
    </source>
</evidence>
<name>CTU2_DROMO</name>
<dbReference type="EMBL" id="CH933807">
    <property type="protein sequence ID" value="EDW13476.1"/>
    <property type="molecule type" value="Genomic_DNA"/>
</dbReference>
<dbReference type="SMR" id="B4KIW3"/>
<dbReference type="FunCoup" id="B4KIW3">
    <property type="interactions" value="1744"/>
</dbReference>
<dbReference type="EnsemblMetazoa" id="FBtr0170505">
    <property type="protein sequence ID" value="FBpp0168997"/>
    <property type="gene ID" value="FBgn0142517"/>
</dbReference>
<dbReference type="EnsemblMetazoa" id="XM_002003998.4">
    <property type="protein sequence ID" value="XP_002004034.1"/>
    <property type="gene ID" value="LOC6578112"/>
</dbReference>
<dbReference type="GeneID" id="6578112"/>
<dbReference type="KEGG" id="dmo:Dmoj_GI19780"/>
<dbReference type="CTD" id="348180"/>
<dbReference type="eggNOG" id="KOG2594">
    <property type="taxonomic scope" value="Eukaryota"/>
</dbReference>
<dbReference type="HOGENOM" id="CLU_024534_2_1_1"/>
<dbReference type="InParanoid" id="B4KIW3"/>
<dbReference type="OMA" id="CHACRNI"/>
<dbReference type="OrthoDB" id="25129at2759"/>
<dbReference type="PhylomeDB" id="B4KIW3"/>
<dbReference type="UniPathway" id="UPA00988"/>
<dbReference type="Proteomes" id="UP000009192">
    <property type="component" value="Unassembled WGS sequence"/>
</dbReference>
<dbReference type="GO" id="GO:0005829">
    <property type="term" value="C:cytosol"/>
    <property type="evidence" value="ECO:0000250"/>
    <property type="project" value="UniProtKB"/>
</dbReference>
<dbReference type="GO" id="GO:0016779">
    <property type="term" value="F:nucleotidyltransferase activity"/>
    <property type="evidence" value="ECO:0007669"/>
    <property type="project" value="UniProtKB-UniRule"/>
</dbReference>
<dbReference type="GO" id="GO:0016783">
    <property type="term" value="F:sulfurtransferase activity"/>
    <property type="evidence" value="ECO:0007669"/>
    <property type="project" value="TreeGrafter"/>
</dbReference>
<dbReference type="GO" id="GO:0000049">
    <property type="term" value="F:tRNA binding"/>
    <property type="evidence" value="ECO:0007669"/>
    <property type="project" value="InterPro"/>
</dbReference>
<dbReference type="GO" id="GO:0032447">
    <property type="term" value="P:protein urmylation"/>
    <property type="evidence" value="ECO:0007669"/>
    <property type="project" value="UniProtKB-UniRule"/>
</dbReference>
<dbReference type="GO" id="GO:0034227">
    <property type="term" value="P:tRNA thio-modification"/>
    <property type="evidence" value="ECO:0000250"/>
    <property type="project" value="UniProtKB"/>
</dbReference>
<dbReference type="GO" id="GO:0002143">
    <property type="term" value="P:tRNA wobble position uridine thiolation"/>
    <property type="evidence" value="ECO:0007669"/>
    <property type="project" value="TreeGrafter"/>
</dbReference>
<dbReference type="GO" id="GO:0002098">
    <property type="term" value="P:tRNA wobble uridine modification"/>
    <property type="evidence" value="ECO:0000250"/>
    <property type="project" value="UniProtKB"/>
</dbReference>
<dbReference type="FunFam" id="3.40.50.620:FF:000229">
    <property type="entry name" value="Cytoplasmic tRNA 2-thiolation protein 2"/>
    <property type="match status" value="1"/>
</dbReference>
<dbReference type="Gene3D" id="3.40.50.620">
    <property type="entry name" value="HUPs"/>
    <property type="match status" value="1"/>
</dbReference>
<dbReference type="HAMAP" id="MF_03054">
    <property type="entry name" value="CTU2"/>
    <property type="match status" value="1"/>
</dbReference>
<dbReference type="InterPro" id="IPR019407">
    <property type="entry name" value="CTU2"/>
</dbReference>
<dbReference type="InterPro" id="IPR014729">
    <property type="entry name" value="Rossmann-like_a/b/a_fold"/>
</dbReference>
<dbReference type="PANTHER" id="PTHR20882">
    <property type="entry name" value="CYTOPLASMIC TRNA 2-THIOLATION PROTEIN 2"/>
    <property type="match status" value="1"/>
</dbReference>
<dbReference type="PANTHER" id="PTHR20882:SF14">
    <property type="entry name" value="CYTOPLASMIC TRNA 2-THIOLATION PROTEIN 2"/>
    <property type="match status" value="1"/>
</dbReference>
<dbReference type="Pfam" id="PF10288">
    <property type="entry name" value="CTU2"/>
    <property type="match status" value="1"/>
</dbReference>
<comment type="function">
    <text evidence="1">Plays a central role in 2-thiolation of mcm(5)S(2)U at tRNA wobble positions of tRNA(Lys), tRNA(Glu) and tRNA(Gln). May act by forming a heterodimer with NCS6/CTU1 that ligates sulfur from thiocarboxylated URM1 onto the uridine of tRNAs at wobble position.</text>
</comment>
<comment type="pathway">
    <text evidence="1">tRNA modification; 5-methoxycarbonylmethyl-2-thiouridine-tRNA biosynthesis.</text>
</comment>
<comment type="subcellular location">
    <subcellularLocation>
        <location evidence="1">Cytoplasm</location>
    </subcellularLocation>
</comment>
<comment type="similarity">
    <text evidence="1">Belongs to the CTU2/NCS2 family.</text>
</comment>
<accession>B4KIW3</accession>
<keyword id="KW-0963">Cytoplasm</keyword>
<keyword id="KW-1185">Reference proteome</keyword>
<keyword id="KW-0819">tRNA processing</keyword>